<proteinExistence type="inferred from homology"/>
<evidence type="ECO:0000255" key="1">
    <source>
        <dbReference type="HAMAP-Rule" id="MF_01062"/>
    </source>
</evidence>
<protein>
    <recommendedName>
        <fullName evidence="1">Putative phosphoenolpyruvate synthase regulatory protein</fullName>
        <shortName evidence="1">PEP synthase regulatory protein</shortName>
        <shortName evidence="1">PSRP</shortName>
        <ecNumber evidence="1">2.7.11.33</ecNumber>
        <ecNumber evidence="1">2.7.4.28</ecNumber>
    </recommendedName>
    <alternativeName>
        <fullName evidence="1">Pyruvate, water dikinase regulatory protein</fullName>
    </alternativeName>
</protein>
<sequence length="278" mass="31217">MSESKQFKRSVFFISDGTAITAETLGHSLLAQFPNVDFDIHIMPYITTEEAAMAVVVEINKCQTRDGCLPLVFDTLVDPHVREIINTAKAVNLDVFEGLISKLEQELGTPPTTLVGQTHAVTDSEYYKARIDAVHFALDNDDGARTRHYDKADLILIGVSRSGKTPTSIYLSLQFGIRVANYPLTEEDLDDNRLPAVLREHRSKLFGLMIDAERLVAIRSERKANSRYASFSQCQMELRAIEGIYISEGIKYLNVTEMSIEEISTRILQMTGLKRRIG</sequence>
<accession>A3M6P6</accession>
<comment type="function">
    <text evidence="1">Bifunctional serine/threonine kinase and phosphorylase involved in the regulation of the phosphoenolpyruvate synthase (PEPS) by catalyzing its phosphorylation/dephosphorylation.</text>
</comment>
<comment type="catalytic activity">
    <reaction evidence="1">
        <text>[pyruvate, water dikinase] + ADP = [pyruvate, water dikinase]-phosphate + AMP + H(+)</text>
        <dbReference type="Rhea" id="RHEA:46020"/>
        <dbReference type="Rhea" id="RHEA-COMP:11425"/>
        <dbReference type="Rhea" id="RHEA-COMP:11426"/>
        <dbReference type="ChEBI" id="CHEBI:15378"/>
        <dbReference type="ChEBI" id="CHEBI:43176"/>
        <dbReference type="ChEBI" id="CHEBI:68546"/>
        <dbReference type="ChEBI" id="CHEBI:456215"/>
        <dbReference type="ChEBI" id="CHEBI:456216"/>
        <dbReference type="EC" id="2.7.11.33"/>
    </reaction>
</comment>
<comment type="catalytic activity">
    <reaction evidence="1">
        <text>[pyruvate, water dikinase]-phosphate + phosphate + H(+) = [pyruvate, water dikinase] + diphosphate</text>
        <dbReference type="Rhea" id="RHEA:48580"/>
        <dbReference type="Rhea" id="RHEA-COMP:11425"/>
        <dbReference type="Rhea" id="RHEA-COMP:11426"/>
        <dbReference type="ChEBI" id="CHEBI:15378"/>
        <dbReference type="ChEBI" id="CHEBI:33019"/>
        <dbReference type="ChEBI" id="CHEBI:43176"/>
        <dbReference type="ChEBI" id="CHEBI:43474"/>
        <dbReference type="ChEBI" id="CHEBI:68546"/>
        <dbReference type="EC" id="2.7.4.28"/>
    </reaction>
</comment>
<comment type="similarity">
    <text evidence="1">Belongs to the pyruvate, phosphate/water dikinase regulatory protein family. PSRP subfamily.</text>
</comment>
<keyword id="KW-0418">Kinase</keyword>
<keyword id="KW-0547">Nucleotide-binding</keyword>
<keyword id="KW-0723">Serine/threonine-protein kinase</keyword>
<keyword id="KW-0808">Transferase</keyword>
<name>PSRP_ACIBT</name>
<dbReference type="EC" id="2.7.11.33" evidence="1"/>
<dbReference type="EC" id="2.7.4.28" evidence="1"/>
<dbReference type="EMBL" id="CP000521">
    <property type="protein sequence ID" value="ABO12590.2"/>
    <property type="molecule type" value="Genomic_DNA"/>
</dbReference>
<dbReference type="RefSeq" id="WP_000004354.1">
    <property type="nucleotide sequence ID" value="NZ_CP053098.1"/>
</dbReference>
<dbReference type="SMR" id="A3M6P6"/>
<dbReference type="KEGG" id="acb:A1S_2163"/>
<dbReference type="HOGENOM" id="CLU_046206_1_0_6"/>
<dbReference type="GO" id="GO:0043531">
    <property type="term" value="F:ADP binding"/>
    <property type="evidence" value="ECO:0007669"/>
    <property type="project" value="UniProtKB-UniRule"/>
</dbReference>
<dbReference type="GO" id="GO:0005524">
    <property type="term" value="F:ATP binding"/>
    <property type="evidence" value="ECO:0007669"/>
    <property type="project" value="InterPro"/>
</dbReference>
<dbReference type="GO" id="GO:0016776">
    <property type="term" value="F:phosphotransferase activity, phosphate group as acceptor"/>
    <property type="evidence" value="ECO:0007669"/>
    <property type="project" value="UniProtKB-UniRule"/>
</dbReference>
<dbReference type="GO" id="GO:0004674">
    <property type="term" value="F:protein serine/threonine kinase activity"/>
    <property type="evidence" value="ECO:0007669"/>
    <property type="project" value="UniProtKB-UniRule"/>
</dbReference>
<dbReference type="HAMAP" id="MF_01062">
    <property type="entry name" value="PSRP"/>
    <property type="match status" value="1"/>
</dbReference>
<dbReference type="InterPro" id="IPR005177">
    <property type="entry name" value="Kinase-pyrophosphorylase"/>
</dbReference>
<dbReference type="InterPro" id="IPR026530">
    <property type="entry name" value="PSRP"/>
</dbReference>
<dbReference type="NCBIfam" id="NF003742">
    <property type="entry name" value="PRK05339.1"/>
    <property type="match status" value="1"/>
</dbReference>
<dbReference type="PANTHER" id="PTHR31756">
    <property type="entry name" value="PYRUVATE, PHOSPHATE DIKINASE REGULATORY PROTEIN 1, CHLOROPLASTIC"/>
    <property type="match status" value="1"/>
</dbReference>
<dbReference type="PANTHER" id="PTHR31756:SF3">
    <property type="entry name" value="PYRUVATE, PHOSPHATE DIKINASE REGULATORY PROTEIN 1, CHLOROPLASTIC"/>
    <property type="match status" value="1"/>
</dbReference>
<dbReference type="Pfam" id="PF03618">
    <property type="entry name" value="Kinase-PPPase"/>
    <property type="match status" value="1"/>
</dbReference>
<feature type="chain" id="PRO_0000316628" description="Putative phosphoenolpyruvate synthase regulatory protein">
    <location>
        <begin position="1"/>
        <end position="278"/>
    </location>
</feature>
<feature type="binding site" evidence="1">
    <location>
        <begin position="158"/>
        <end position="165"/>
    </location>
    <ligand>
        <name>ADP</name>
        <dbReference type="ChEBI" id="CHEBI:456216"/>
    </ligand>
</feature>
<organism>
    <name type="scientific">Acinetobacter baumannii (strain ATCC 17978 / DSM 105126 / CIP 53.77 / LMG 1025 / NCDC KC755 / 5377)</name>
    <dbReference type="NCBI Taxonomy" id="400667"/>
    <lineage>
        <taxon>Bacteria</taxon>
        <taxon>Pseudomonadati</taxon>
        <taxon>Pseudomonadota</taxon>
        <taxon>Gammaproteobacteria</taxon>
        <taxon>Moraxellales</taxon>
        <taxon>Moraxellaceae</taxon>
        <taxon>Acinetobacter</taxon>
        <taxon>Acinetobacter calcoaceticus/baumannii complex</taxon>
    </lineage>
</organism>
<reference key="1">
    <citation type="journal article" date="2007" name="Genes Dev.">
        <title>New insights into Acinetobacter baumannii pathogenesis revealed by high-density pyrosequencing and transposon mutagenesis.</title>
        <authorList>
            <person name="Smith M.G."/>
            <person name="Gianoulis T.A."/>
            <person name="Pukatzki S."/>
            <person name="Mekalanos J.J."/>
            <person name="Ornston L.N."/>
            <person name="Gerstein M."/>
            <person name="Snyder M."/>
        </authorList>
    </citation>
    <scope>NUCLEOTIDE SEQUENCE [LARGE SCALE GENOMIC DNA]</scope>
    <source>
        <strain>ATCC 17978 / DSM 105126 / CIP 53.77 / LMG 1025 / NCDC KC755 / 5377</strain>
    </source>
</reference>
<gene>
    <name type="ordered locus">A1S_2163</name>
</gene>